<evidence type="ECO:0000256" key="1">
    <source>
        <dbReference type="SAM" id="MobiDB-lite"/>
    </source>
</evidence>
<evidence type="ECO:0000305" key="2"/>
<evidence type="ECO:0000312" key="3">
    <source>
        <dbReference type="WormBase" id="F34H10.4a"/>
    </source>
</evidence>
<evidence type="ECO:0000312" key="4">
    <source>
        <dbReference type="WormBase" id="F34H10.4b"/>
    </source>
</evidence>
<proteinExistence type="predicted"/>
<keyword id="KW-0025">Alternative splicing</keyword>
<keyword id="KW-1185">Reference proteome</keyword>
<feature type="chain" id="PRO_0000065321" description="Uncharacterized protein F34H10.4">
    <location>
        <begin position="1"/>
        <end position="357"/>
    </location>
</feature>
<feature type="region of interest" description="Disordered" evidence="1">
    <location>
        <begin position="120"/>
        <end position="145"/>
    </location>
</feature>
<feature type="splice variant" id="VSP_060614" description="In isoform a." evidence="2">
    <location>
        <begin position="101"/>
        <end position="115"/>
    </location>
</feature>
<protein>
    <recommendedName>
        <fullName>Uncharacterized protein F34H10.4</fullName>
    </recommendedName>
</protein>
<comment type="alternative products">
    <event type="alternative splicing"/>
    <isoform>
        <id>Q09317-1</id>
        <name evidence="4">b</name>
        <sequence type="displayed"/>
    </isoform>
    <isoform>
        <id>Q09317-2</id>
        <name evidence="3">a</name>
        <sequence type="described" ref="VSP_060614"/>
    </isoform>
</comment>
<name>YQX4_CAEEL</name>
<gene>
    <name evidence="4" type="ORF">F34H10.4</name>
</gene>
<dbReference type="EMBL" id="BX284606">
    <property type="protein sequence ID" value="VTW47564.1"/>
    <property type="molecule type" value="Genomic_DNA"/>
</dbReference>
<dbReference type="EMBL" id="BX284606">
    <property type="protein sequence ID" value="VTW47565.1"/>
    <property type="molecule type" value="Genomic_DNA"/>
</dbReference>
<dbReference type="PIR" id="T21728">
    <property type="entry name" value="T21728"/>
</dbReference>
<dbReference type="RefSeq" id="NP_001360740.1">
    <molecule id="Q09317-2"/>
    <property type="nucleotide sequence ID" value="NM_001373447.2"/>
</dbReference>
<dbReference type="RefSeq" id="NP_001360741.1">
    <molecule id="Q09317-1"/>
    <property type="nucleotide sequence ID" value="NM_001373446.3"/>
</dbReference>
<dbReference type="SMR" id="Q09317"/>
<dbReference type="FunCoup" id="Q09317">
    <property type="interactions" value="1475"/>
</dbReference>
<dbReference type="PaxDb" id="6239-F34H10.4"/>
<dbReference type="EnsemblMetazoa" id="F34H10.4a.1">
    <molecule id="Q09317-2"/>
    <property type="protein sequence ID" value="F34H10.4a.1"/>
    <property type="gene ID" value="WBGene00009381"/>
</dbReference>
<dbReference type="EnsemblMetazoa" id="F34H10.4b.1">
    <molecule id="Q09317-1"/>
    <property type="protein sequence ID" value="F34H10.4b.1"/>
    <property type="gene ID" value="WBGene00009381"/>
</dbReference>
<dbReference type="GeneID" id="185245"/>
<dbReference type="UCSC" id="F34H10.4">
    <molecule id="Q09317-1"/>
    <property type="organism name" value="c. elegans"/>
</dbReference>
<dbReference type="AGR" id="WB:WBGene00009381"/>
<dbReference type="WormBase" id="F34H10.4a">
    <molecule id="Q09317-2"/>
    <property type="protein sequence ID" value="CE53482"/>
    <property type="gene ID" value="WBGene00009381"/>
</dbReference>
<dbReference type="WormBase" id="F34H10.4b">
    <molecule id="Q09317-1"/>
    <property type="protein sequence ID" value="CE53368"/>
    <property type="gene ID" value="WBGene00009381"/>
</dbReference>
<dbReference type="eggNOG" id="ENOG502TIAF">
    <property type="taxonomic scope" value="Eukaryota"/>
</dbReference>
<dbReference type="HOGENOM" id="CLU_605867_0_0_1"/>
<dbReference type="InParanoid" id="Q09317"/>
<dbReference type="OrthoDB" id="5811975at2759"/>
<dbReference type="PRO" id="PR:Q09317"/>
<dbReference type="Proteomes" id="UP000001940">
    <property type="component" value="Chromosome X"/>
</dbReference>
<dbReference type="Bgee" id="WBGene00009381">
    <property type="expression patterns" value="Expressed in pharyngeal muscle cell (C elegans) and 2 other cell types or tissues"/>
</dbReference>
<reference key="1">
    <citation type="journal article" date="1998" name="Science">
        <title>Genome sequence of the nematode C. elegans: a platform for investigating biology.</title>
        <authorList>
            <consortium name="The C. elegans sequencing consortium"/>
        </authorList>
    </citation>
    <scope>NUCLEOTIDE SEQUENCE [LARGE SCALE GENOMIC DNA]</scope>
    <source>
        <strain>Bristol N2</strain>
    </source>
</reference>
<organism>
    <name type="scientific">Caenorhabditis elegans</name>
    <dbReference type="NCBI Taxonomy" id="6239"/>
    <lineage>
        <taxon>Eukaryota</taxon>
        <taxon>Metazoa</taxon>
        <taxon>Ecdysozoa</taxon>
        <taxon>Nematoda</taxon>
        <taxon>Chromadorea</taxon>
        <taxon>Rhabditida</taxon>
        <taxon>Rhabditina</taxon>
        <taxon>Rhabditomorpha</taxon>
        <taxon>Rhabditoidea</taxon>
        <taxon>Rhabditidae</taxon>
        <taxon>Peloderinae</taxon>
        <taxon>Caenorhabditis</taxon>
    </lineage>
</organism>
<sequence>MTTHKQQIQDVYNCLGTVSHLLKESHTGEEIDDFEDNFYSQQMQKASANGSMFPNTLHQVSNFLEKLSVQAYNVQPLLSSAKYEILSNVRNLKSESDGKINRYEHESALGLKKLFNSPISSSTVNHDQPAEQPSDKSTDDSTGYPPWAIEAFNSESNIKNVGPPNFPMGQLGEILIGADPVISPRRQFPPPHYLEQLQRDHPPLFHLNAFDSPPPSPGNELEDYDFNMQIDLNGVIPADVQLLDEFQQENDKTESNNTICQLDLCSSFQYLLKTTTENAQDKQNVLKEILHHSDLVLHHAADQCPFVLKEDMIELSTCIGLIYESLERNTDFESYLKVRSVVQYLVSKVRSALKKYI</sequence>
<accession>Q09317</accession>
<accession>A0A4V0ILQ1</accession>
<accession>A0A4V0IM47</accession>